<dbReference type="EMBL" id="CR382123">
    <property type="protein sequence ID" value="CAH01308.1"/>
    <property type="molecule type" value="Genomic_DNA"/>
</dbReference>
<dbReference type="RefSeq" id="XP_452457.1">
    <property type="nucleotide sequence ID" value="XM_452457.1"/>
</dbReference>
<dbReference type="SMR" id="Q6CUD2"/>
<dbReference type="FunCoup" id="Q6CUD2">
    <property type="interactions" value="141"/>
</dbReference>
<dbReference type="STRING" id="284590.Q6CUD2"/>
<dbReference type="PaxDb" id="284590-Q6CUD2"/>
<dbReference type="KEGG" id="kla:KLLA0_C05786g"/>
<dbReference type="eggNOG" id="KOG4086">
    <property type="taxonomic scope" value="Eukaryota"/>
</dbReference>
<dbReference type="HOGENOM" id="CLU_147521_0_0_1"/>
<dbReference type="InParanoid" id="Q6CUD2"/>
<dbReference type="OMA" id="YLEYWCE"/>
<dbReference type="Proteomes" id="UP000000598">
    <property type="component" value="Chromosome C"/>
</dbReference>
<dbReference type="GO" id="GO:0016592">
    <property type="term" value="C:mediator complex"/>
    <property type="evidence" value="ECO:0007669"/>
    <property type="project" value="InterPro"/>
</dbReference>
<dbReference type="GO" id="GO:0003712">
    <property type="term" value="F:transcription coregulator activity"/>
    <property type="evidence" value="ECO:0007669"/>
    <property type="project" value="InterPro"/>
</dbReference>
<dbReference type="GO" id="GO:0006355">
    <property type="term" value="P:regulation of DNA-templated transcription"/>
    <property type="evidence" value="ECO:0007669"/>
    <property type="project" value="InterPro"/>
</dbReference>
<dbReference type="Gene3D" id="1.10.10.1340">
    <property type="entry name" value="Mediator of RNA polymerase II, submodule Med31 (Soh1)"/>
    <property type="match status" value="1"/>
</dbReference>
<dbReference type="InterPro" id="IPR038089">
    <property type="entry name" value="Med31_sf"/>
</dbReference>
<dbReference type="InterPro" id="IPR008831">
    <property type="entry name" value="Mediator_Med31"/>
</dbReference>
<dbReference type="PANTHER" id="PTHR13186">
    <property type="entry name" value="MEDIATOR OF RNA POLYMERASE II TRANSCRIPTION SUBUNIT 31"/>
    <property type="match status" value="1"/>
</dbReference>
<dbReference type="Pfam" id="PF05669">
    <property type="entry name" value="Med31"/>
    <property type="match status" value="1"/>
</dbReference>
<comment type="function">
    <text evidence="1">Component of the Mediator complex, a coactivator involved in the regulated transcription of nearly all RNA polymerase II-dependent genes. Mediator functions as a bridge to convey information from gene-specific regulatory proteins to the basal RNA polymerase II transcription machinery. Mediator is recruited to promoters by direct interactions with regulatory proteins and serves as a scaffold for the assembly of a functional preinitiation complex with RNA polymerase II and the general transcription factors (By similarity).</text>
</comment>
<comment type="subunit">
    <text evidence="1">Component of the Mediator complex.</text>
</comment>
<comment type="subcellular location">
    <subcellularLocation>
        <location evidence="1">Nucleus</location>
    </subcellularLocation>
</comment>
<comment type="similarity">
    <text evidence="2">Belongs to the Mediator complex subunit 31 family.</text>
</comment>
<sequence length="124" mass="14794">MSQQASTELTIEEGELPTRFEIELEFVQSLANIPYVTYLLTQLQLWQDPKFKRYLKYLEYWHEPEYAQCIVYPNSLFVLKLLNTLFEGSTVNENGVLEGCEHVPRILQTQGTQWMNEMVERWRE</sequence>
<accession>Q6CUD2</accession>
<keyword id="KW-0010">Activator</keyword>
<keyword id="KW-0539">Nucleus</keyword>
<keyword id="KW-1185">Reference proteome</keyword>
<keyword id="KW-0804">Transcription</keyword>
<keyword id="KW-0805">Transcription regulation</keyword>
<evidence type="ECO:0000250" key="1"/>
<evidence type="ECO:0000305" key="2"/>
<proteinExistence type="inferred from homology"/>
<name>MED31_KLULA</name>
<organism>
    <name type="scientific">Kluyveromyces lactis (strain ATCC 8585 / CBS 2359 / DSM 70799 / NBRC 1267 / NRRL Y-1140 / WM37)</name>
    <name type="common">Yeast</name>
    <name type="synonym">Candida sphaerica</name>
    <dbReference type="NCBI Taxonomy" id="284590"/>
    <lineage>
        <taxon>Eukaryota</taxon>
        <taxon>Fungi</taxon>
        <taxon>Dikarya</taxon>
        <taxon>Ascomycota</taxon>
        <taxon>Saccharomycotina</taxon>
        <taxon>Saccharomycetes</taxon>
        <taxon>Saccharomycetales</taxon>
        <taxon>Saccharomycetaceae</taxon>
        <taxon>Kluyveromyces</taxon>
    </lineage>
</organism>
<feature type="chain" id="PRO_0000305726" description="Mediator of RNA polymerase II transcription subunit 31">
    <location>
        <begin position="1"/>
        <end position="124"/>
    </location>
</feature>
<reference key="1">
    <citation type="journal article" date="2004" name="Nature">
        <title>Genome evolution in yeasts.</title>
        <authorList>
            <person name="Dujon B."/>
            <person name="Sherman D."/>
            <person name="Fischer G."/>
            <person name="Durrens P."/>
            <person name="Casaregola S."/>
            <person name="Lafontaine I."/>
            <person name="de Montigny J."/>
            <person name="Marck C."/>
            <person name="Neuveglise C."/>
            <person name="Talla E."/>
            <person name="Goffard N."/>
            <person name="Frangeul L."/>
            <person name="Aigle M."/>
            <person name="Anthouard V."/>
            <person name="Babour A."/>
            <person name="Barbe V."/>
            <person name="Barnay S."/>
            <person name="Blanchin S."/>
            <person name="Beckerich J.-M."/>
            <person name="Beyne E."/>
            <person name="Bleykasten C."/>
            <person name="Boisrame A."/>
            <person name="Boyer J."/>
            <person name="Cattolico L."/>
            <person name="Confanioleri F."/>
            <person name="de Daruvar A."/>
            <person name="Despons L."/>
            <person name="Fabre E."/>
            <person name="Fairhead C."/>
            <person name="Ferry-Dumazet H."/>
            <person name="Groppi A."/>
            <person name="Hantraye F."/>
            <person name="Hennequin C."/>
            <person name="Jauniaux N."/>
            <person name="Joyet P."/>
            <person name="Kachouri R."/>
            <person name="Kerrest A."/>
            <person name="Koszul R."/>
            <person name="Lemaire M."/>
            <person name="Lesur I."/>
            <person name="Ma L."/>
            <person name="Muller H."/>
            <person name="Nicaud J.-M."/>
            <person name="Nikolski M."/>
            <person name="Oztas S."/>
            <person name="Ozier-Kalogeropoulos O."/>
            <person name="Pellenz S."/>
            <person name="Potier S."/>
            <person name="Richard G.-F."/>
            <person name="Straub M.-L."/>
            <person name="Suleau A."/>
            <person name="Swennen D."/>
            <person name="Tekaia F."/>
            <person name="Wesolowski-Louvel M."/>
            <person name="Westhof E."/>
            <person name="Wirth B."/>
            <person name="Zeniou-Meyer M."/>
            <person name="Zivanovic Y."/>
            <person name="Bolotin-Fukuhara M."/>
            <person name="Thierry A."/>
            <person name="Bouchier C."/>
            <person name="Caudron B."/>
            <person name="Scarpelli C."/>
            <person name="Gaillardin C."/>
            <person name="Weissenbach J."/>
            <person name="Wincker P."/>
            <person name="Souciet J.-L."/>
        </authorList>
    </citation>
    <scope>NUCLEOTIDE SEQUENCE [LARGE SCALE GENOMIC DNA]</scope>
    <source>
        <strain>ATCC 8585 / CBS 2359 / DSM 70799 / NBRC 1267 / NRRL Y-1140 / WM37</strain>
    </source>
</reference>
<gene>
    <name type="primary">SOH1</name>
    <name type="synonym">MED31</name>
    <name type="ordered locus">KLLA0C05786g</name>
</gene>
<protein>
    <recommendedName>
        <fullName>Mediator of RNA polymerase II transcription subunit 31</fullName>
    </recommendedName>
    <alternativeName>
        <fullName>Mediator complex subunit 31</fullName>
    </alternativeName>
</protein>